<keyword id="KW-0997">Cell inner membrane</keyword>
<keyword id="KW-1003">Cell membrane</keyword>
<keyword id="KW-0472">Membrane</keyword>
<keyword id="KW-0653">Protein transport</keyword>
<keyword id="KW-0811">Translocation</keyword>
<keyword id="KW-0812">Transmembrane</keyword>
<keyword id="KW-1133">Transmembrane helix</keyword>
<keyword id="KW-0813">Transport</keyword>
<feature type="chain" id="PRO_0000098088" description="Sec-independent protein translocase protein TatC">
    <location>
        <begin position="1"/>
        <end position="249"/>
    </location>
</feature>
<feature type="transmembrane region" description="Helical" evidence="1">
    <location>
        <begin position="18"/>
        <end position="38"/>
    </location>
</feature>
<feature type="transmembrane region" description="Helical" evidence="1">
    <location>
        <begin position="69"/>
        <end position="89"/>
    </location>
</feature>
<feature type="transmembrane region" description="Helical" evidence="1">
    <location>
        <begin position="96"/>
        <end position="116"/>
    </location>
</feature>
<feature type="transmembrane region" description="Helical" evidence="1">
    <location>
        <begin position="151"/>
        <end position="171"/>
    </location>
</feature>
<feature type="transmembrane region" description="Helical" evidence="1">
    <location>
        <begin position="187"/>
        <end position="207"/>
    </location>
</feature>
<feature type="transmembrane region" description="Helical" evidence="1">
    <location>
        <begin position="208"/>
        <end position="228"/>
    </location>
</feature>
<reference key="1">
    <citation type="journal article" date="1999" name="Nature">
        <title>Genomic sequence comparison of two unrelated isolates of the human gastric pathogen Helicobacter pylori.</title>
        <authorList>
            <person name="Alm R.A."/>
            <person name="Ling L.-S.L."/>
            <person name="Moir D.T."/>
            <person name="King B.L."/>
            <person name="Brown E.D."/>
            <person name="Doig P.C."/>
            <person name="Smith D.R."/>
            <person name="Noonan B."/>
            <person name="Guild B.C."/>
            <person name="deJonge B.L."/>
            <person name="Carmel G."/>
            <person name="Tummino P.J."/>
            <person name="Caruso A."/>
            <person name="Uria-Nickelsen M."/>
            <person name="Mills D.M."/>
            <person name="Ives C."/>
            <person name="Gibson R."/>
            <person name="Merberg D."/>
            <person name="Mills S.D."/>
            <person name="Jiang Q."/>
            <person name="Taylor D.E."/>
            <person name="Vovis G.F."/>
            <person name="Trust T.J."/>
        </authorList>
    </citation>
    <scope>NUCLEOTIDE SEQUENCE [LARGE SCALE GENOMIC DNA]</scope>
    <source>
        <strain>J99 / ATCC 700824</strain>
    </source>
</reference>
<gene>
    <name evidence="1" type="primary">tatC</name>
    <name type="ordered locus">jhp_0364</name>
</gene>
<dbReference type="EMBL" id="AE001439">
    <property type="protein sequence ID" value="AAD05940.1"/>
    <property type="molecule type" value="Genomic_DNA"/>
</dbReference>
<dbReference type="PIR" id="D71942">
    <property type="entry name" value="D71942"/>
</dbReference>
<dbReference type="RefSeq" id="WP_000461222.1">
    <property type="nucleotide sequence ID" value="NZ_CP011330.1"/>
</dbReference>
<dbReference type="SMR" id="Q9ZM59"/>
<dbReference type="KEGG" id="hpj:jhp_0364"/>
<dbReference type="PATRIC" id="fig|85963.30.peg.647"/>
<dbReference type="eggNOG" id="COG0805">
    <property type="taxonomic scope" value="Bacteria"/>
</dbReference>
<dbReference type="Proteomes" id="UP000000804">
    <property type="component" value="Chromosome"/>
</dbReference>
<dbReference type="GO" id="GO:0033281">
    <property type="term" value="C:TAT protein transport complex"/>
    <property type="evidence" value="ECO:0007669"/>
    <property type="project" value="UniProtKB-UniRule"/>
</dbReference>
<dbReference type="GO" id="GO:0009977">
    <property type="term" value="F:proton motive force dependent protein transmembrane transporter activity"/>
    <property type="evidence" value="ECO:0007669"/>
    <property type="project" value="TreeGrafter"/>
</dbReference>
<dbReference type="GO" id="GO:0065002">
    <property type="term" value="P:intracellular protein transmembrane transport"/>
    <property type="evidence" value="ECO:0007669"/>
    <property type="project" value="TreeGrafter"/>
</dbReference>
<dbReference type="GO" id="GO:0043953">
    <property type="term" value="P:protein transport by the Tat complex"/>
    <property type="evidence" value="ECO:0007669"/>
    <property type="project" value="UniProtKB-UniRule"/>
</dbReference>
<dbReference type="HAMAP" id="MF_00902">
    <property type="entry name" value="TatC"/>
    <property type="match status" value="1"/>
</dbReference>
<dbReference type="InterPro" id="IPR019820">
    <property type="entry name" value="Sec-indep_translocase_CS"/>
</dbReference>
<dbReference type="InterPro" id="IPR002033">
    <property type="entry name" value="TatC"/>
</dbReference>
<dbReference type="NCBIfam" id="TIGR00945">
    <property type="entry name" value="tatC"/>
    <property type="match status" value="1"/>
</dbReference>
<dbReference type="PANTHER" id="PTHR30371">
    <property type="entry name" value="SEC-INDEPENDENT PROTEIN TRANSLOCASE PROTEIN TATC"/>
    <property type="match status" value="1"/>
</dbReference>
<dbReference type="PANTHER" id="PTHR30371:SF0">
    <property type="entry name" value="SEC-INDEPENDENT PROTEIN TRANSLOCASE PROTEIN TATC, CHLOROPLASTIC-RELATED"/>
    <property type="match status" value="1"/>
</dbReference>
<dbReference type="Pfam" id="PF00902">
    <property type="entry name" value="TatC"/>
    <property type="match status" value="1"/>
</dbReference>
<dbReference type="PRINTS" id="PR01840">
    <property type="entry name" value="TATCFAMILY"/>
</dbReference>
<dbReference type="PROSITE" id="PS01218">
    <property type="entry name" value="TATC"/>
    <property type="match status" value="1"/>
</dbReference>
<protein>
    <recommendedName>
        <fullName evidence="1">Sec-independent protein translocase protein TatC</fullName>
    </recommendedName>
</protein>
<organism>
    <name type="scientific">Helicobacter pylori (strain J99 / ATCC 700824)</name>
    <name type="common">Campylobacter pylori J99</name>
    <dbReference type="NCBI Taxonomy" id="85963"/>
    <lineage>
        <taxon>Bacteria</taxon>
        <taxon>Pseudomonadati</taxon>
        <taxon>Campylobacterota</taxon>
        <taxon>Epsilonproteobacteria</taxon>
        <taxon>Campylobacterales</taxon>
        <taxon>Helicobacteraceae</taxon>
        <taxon>Helicobacter</taxon>
    </lineage>
</organism>
<comment type="function">
    <text evidence="1">Part of the twin-arginine translocation (Tat) system that transports large folded proteins containing a characteristic twin-arginine motif in their signal peptide across membranes. Together with TatB, TatC is part of a receptor directly interacting with Tat signal peptides.</text>
</comment>
<comment type="subunit">
    <text evidence="1">The Tat system comprises two distinct complexes: a TatABC complex, containing multiple copies of TatA, TatB and TatC subunits, and a separate TatA complex, containing only TatA subunits. Substrates initially bind to the TatABC complex, which probably triggers association of the separate TatA complex to form the active translocon.</text>
</comment>
<comment type="subcellular location">
    <subcellularLocation>
        <location evidence="1">Cell inner membrane</location>
        <topology evidence="1">Multi-pass membrane protein</topology>
    </subcellularLocation>
</comment>
<comment type="similarity">
    <text evidence="1">Belongs to the TatC family.</text>
</comment>
<name>TATC_HELPJ</name>
<evidence type="ECO:0000255" key="1">
    <source>
        <dbReference type="HAMAP-Rule" id="MF_00902"/>
    </source>
</evidence>
<sequence>MFEDLKPHLQELRKRLMVSVGTILVAFLGCFHFWKNIFEFVKNSYKGTLIQLSPIEGVMVAVKISFSAAIVISMPIIFWQLWLFIAPGLYKNEKKVILPFVFFGSGMFLMGAAFSYYVVFPFIIEYLATFGSDVFAANISASSYVSFFTRLILGFGVAFELPVLAYFLAKVGLITDASLKAYFKYAIVVIFIVAAIITPPDVVSQIFMALPLVGLYGLSILIAKMVNPAPKDNENDHENDAKEHTKSES</sequence>
<proteinExistence type="inferred from homology"/>
<accession>Q9ZM59</accession>